<sequence length="548" mass="59519">MSGDTGPSKQGGTRYGSISSPPSPGPQQAPPGGTYLGEKIPIPDTESGAFSLRKLWAFTGPGFLMSIAFLDPGNIESDLQAGAVAGFKLLWVLLWATVLGLLCQRLAARLGVVTGKDLGEVCHLYYPKVPRILLWLTIELAIVGSDMQEVIGTAIAFSLLSAGRIPLWGGVLITVVDTFFFLFLDNYGLRKLEAFFGFLITIMALTFGYEYVVAQPAQGALLQGLFLPSCRGCGQPELLQAVGIIGAIIMPHNIYLHSSLVKSREVDRSRRADIREANMYFLIEATIALSVSFLINLFVMAVFGQAFYKQTNQAAFNICAKSSLHDYAPIFPRNNLTVAVDIYQGGVILGCLFGPAALYIWAVGLLAAGQSSTMTGTYAGQFVMEGFLKLRWSRFARVLLTRSCAILPTVLLAVFRDLRDLSGLNDLLNVLQSLLLPFAVLPILTFTSMPALMQEFANGLVSKVITSSIMVLVCAVNLYFVISYVPSLPHPAYFSLVALLAAAYLGLTTYLVWTCLITQGATFLAHNSHQRFLYGLPEEDQEKGRTSG</sequence>
<feature type="chain" id="PRO_0000212585" description="Natural resistance-associated macrophage protein 1">
    <location>
        <begin position="1"/>
        <end position="548"/>
    </location>
</feature>
<feature type="topological domain" description="Cytoplasmic" evidence="2">
    <location>
        <begin position="1"/>
        <end position="55"/>
    </location>
</feature>
<feature type="transmembrane region" description="Helical" evidence="2">
    <location>
        <begin position="56"/>
        <end position="73"/>
    </location>
</feature>
<feature type="topological domain" description="Extracellular" evidence="2">
    <location>
        <begin position="74"/>
        <end position="82"/>
    </location>
</feature>
<feature type="transmembrane region" description="Helical" evidence="2">
    <location>
        <begin position="83"/>
        <end position="102"/>
    </location>
</feature>
<feature type="topological domain" description="Cytoplasmic" evidence="2">
    <location>
        <begin position="103"/>
        <end position="139"/>
    </location>
</feature>
<feature type="transmembrane region" description="Helical" evidence="2">
    <location>
        <begin position="140"/>
        <end position="160"/>
    </location>
</feature>
<feature type="topological domain" description="Extracellular" evidence="2">
    <location>
        <begin position="161"/>
        <end position="164"/>
    </location>
</feature>
<feature type="transmembrane region" description="Helical" evidence="2">
    <location>
        <begin position="165"/>
        <end position="184"/>
    </location>
</feature>
<feature type="topological domain" description="Cytoplasmic" evidence="2">
    <location>
        <begin position="185"/>
        <end position="193"/>
    </location>
</feature>
<feature type="transmembrane region" description="Helical" evidence="2">
    <location>
        <begin position="194"/>
        <end position="214"/>
    </location>
</feature>
<feature type="topological domain" description="Extracellular" evidence="2">
    <location>
        <begin position="215"/>
        <end position="237"/>
    </location>
</feature>
<feature type="transmembrane region" description="Helical" evidence="2">
    <location>
        <begin position="238"/>
        <end position="256"/>
    </location>
</feature>
<feature type="topological domain" description="Cytoplasmic" evidence="2">
    <location>
        <begin position="257"/>
        <end position="284"/>
    </location>
</feature>
<feature type="transmembrane region" description="Helical" evidence="2">
    <location>
        <begin position="285"/>
        <end position="304"/>
    </location>
</feature>
<feature type="topological domain" description="Extracellular" evidence="2">
    <location>
        <begin position="305"/>
        <end position="346"/>
    </location>
</feature>
<feature type="transmembrane region" description="Helical" evidence="2">
    <location>
        <begin position="347"/>
        <end position="366"/>
    </location>
</feature>
<feature type="topological domain" description="Cytoplasmic" evidence="2">
    <location>
        <begin position="367"/>
        <end position="397"/>
    </location>
</feature>
<feature type="transmembrane region" description="Helical" evidence="2">
    <location>
        <begin position="398"/>
        <end position="415"/>
    </location>
</feature>
<feature type="topological domain" description="Extracellular" evidence="2">
    <location>
        <begin position="416"/>
        <end position="426"/>
    </location>
</feature>
<feature type="transmembrane region" description="Helical" evidence="2">
    <location>
        <begin position="427"/>
        <end position="447"/>
    </location>
</feature>
<feature type="topological domain" description="Cytoplasmic" evidence="2">
    <location>
        <begin position="448"/>
        <end position="463"/>
    </location>
</feature>
<feature type="transmembrane region" description="Helical" evidence="2">
    <location>
        <begin position="464"/>
        <end position="485"/>
    </location>
</feature>
<feature type="topological domain" description="Extracellular" evidence="2">
    <location>
        <begin position="486"/>
        <end position="493"/>
    </location>
</feature>
<feature type="transmembrane region" description="Helical" evidence="2">
    <location>
        <begin position="494"/>
        <end position="513"/>
    </location>
</feature>
<feature type="topological domain" description="Cytoplasmic" evidence="2">
    <location>
        <begin position="514"/>
        <end position="548"/>
    </location>
</feature>
<feature type="region of interest" description="Disordered" evidence="3">
    <location>
        <begin position="1"/>
        <end position="38"/>
    </location>
</feature>
<feature type="compositionally biased region" description="Polar residues" evidence="3">
    <location>
        <begin position="1"/>
        <end position="11"/>
    </location>
</feature>
<feature type="glycosylation site" description="N-linked (GlcNAc...) asparagine" evidence="2">
    <location>
        <position position="335"/>
    </location>
</feature>
<keyword id="KW-0967">Endosome</keyword>
<keyword id="KW-0325">Glycoprotein</keyword>
<keyword id="KW-0406">Ion transport</keyword>
<keyword id="KW-0408">Iron</keyword>
<keyword id="KW-0410">Iron transport</keyword>
<keyword id="KW-0458">Lysosome</keyword>
<keyword id="KW-0472">Membrane</keyword>
<keyword id="KW-0812">Transmembrane</keyword>
<keyword id="KW-1133">Transmembrane helix</keyword>
<keyword id="KW-0813">Transport</keyword>
<organism>
    <name type="scientific">Bubalus bubalis</name>
    <name type="common">Domestic water buffalo</name>
    <dbReference type="NCBI Taxonomy" id="89462"/>
    <lineage>
        <taxon>Eukaryota</taxon>
        <taxon>Metazoa</taxon>
        <taxon>Chordata</taxon>
        <taxon>Craniata</taxon>
        <taxon>Vertebrata</taxon>
        <taxon>Euteleostomi</taxon>
        <taxon>Mammalia</taxon>
        <taxon>Eutheria</taxon>
        <taxon>Laurasiatheria</taxon>
        <taxon>Artiodactyla</taxon>
        <taxon>Ruminantia</taxon>
        <taxon>Pecora</taxon>
        <taxon>Bovidae</taxon>
        <taxon>Bovinae</taxon>
        <taxon>Bubalus</taxon>
    </lineage>
</organism>
<protein>
    <recommendedName>
        <fullName>Natural resistance-associated macrophage protein 1</fullName>
        <shortName>NRAMP 1</shortName>
    </recommendedName>
    <alternativeName>
        <fullName>Solute carrier family 11 member 1</fullName>
    </alternativeName>
</protein>
<reference key="1">
    <citation type="submission" date="1996-07" db="EMBL/GenBank/DDBJ databases">
        <title>Cloning, sequencing, and characterization of water buffalo Nramp cDNA.</title>
        <authorList>
            <person name="Hashad M."/>
            <person name="Feng J."/>
            <person name="Refai M.K."/>
            <person name="Templeton J.W."/>
        </authorList>
    </citation>
    <scope>NUCLEOTIDE SEQUENCE [MRNA]</scope>
</reference>
<comment type="function">
    <text evidence="1">Macrophage-specific antiporter that fluxes metal ions in either direction against a proton gradient. Localized to late endosomal lysosomal membranes, delivers bivalent cations from the cytosol into these acidic compartments where they may directly affect antimicrobial activity. Involved in iron metabolism and host natural resistance to infection with intracellular parasites. Pathogen resistance involves sequestration of Fe(2+) and Mn(2+), cofactors of both prokaryotic and eukaryotic catalases and superoxide dismutases, not only to protect the macrophage against its own generation of reactive oxygen species, but to deny the cations to the pathogen for synthesis of its protective enzymes.</text>
</comment>
<comment type="catalytic activity">
    <reaction evidence="1">
        <text>Zn(2+)(in) + H(+)(out) = Zn(2+)(out) + H(+)(in)</text>
        <dbReference type="Rhea" id="RHEA:28839"/>
        <dbReference type="ChEBI" id="CHEBI:15378"/>
        <dbReference type="ChEBI" id="CHEBI:29105"/>
    </reaction>
</comment>
<comment type="catalytic activity">
    <reaction evidence="1">
        <text>Fe(2+)(in) + H(+)(out) = Fe(2+)(out) + H(+)(in)</text>
        <dbReference type="Rhea" id="RHEA:29439"/>
        <dbReference type="ChEBI" id="CHEBI:15378"/>
        <dbReference type="ChEBI" id="CHEBI:29033"/>
    </reaction>
</comment>
<comment type="catalytic activity">
    <reaction evidence="1">
        <text>Mn(2+)(in) + H(+)(out) = Mn(2+)(out) + H(+)(in)</text>
        <dbReference type="Rhea" id="RHEA:73063"/>
        <dbReference type="ChEBI" id="CHEBI:15378"/>
        <dbReference type="ChEBI" id="CHEBI:29035"/>
    </reaction>
</comment>
<comment type="subcellular location">
    <subcellularLocation>
        <location evidence="1">Late endosome membrane</location>
        <topology evidence="2">Multi-pass membrane protein</topology>
    </subcellularLocation>
    <subcellularLocation>
        <location evidence="1">Lysosome membrane</location>
        <topology evidence="2">Multi-pass membrane protein</topology>
    </subcellularLocation>
</comment>
<comment type="similarity">
    <text evidence="4">Belongs to the NRAMP family.</text>
</comment>
<proteinExistence type="evidence at transcript level"/>
<gene>
    <name type="primary">SLC11A1</name>
    <name type="synonym">NRAMP1</name>
</gene>
<accession>Q27946</accession>
<evidence type="ECO:0000250" key="1">
    <source>
        <dbReference type="UniProtKB" id="P49279"/>
    </source>
</evidence>
<evidence type="ECO:0000255" key="2"/>
<evidence type="ECO:0000256" key="3">
    <source>
        <dbReference type="SAM" id="MobiDB-lite"/>
    </source>
</evidence>
<evidence type="ECO:0000305" key="4"/>
<dbReference type="EMBL" id="U27105">
    <property type="protein sequence ID" value="AAB05591.1"/>
    <property type="molecule type" value="mRNA"/>
</dbReference>
<dbReference type="SMR" id="Q27946"/>
<dbReference type="GlyCosmos" id="Q27946">
    <property type="glycosylation" value="1 site, No reported glycans"/>
</dbReference>
<dbReference type="GO" id="GO:0031902">
    <property type="term" value="C:late endosome membrane"/>
    <property type="evidence" value="ECO:0007669"/>
    <property type="project" value="UniProtKB-SubCell"/>
</dbReference>
<dbReference type="GO" id="GO:0005765">
    <property type="term" value="C:lysosomal membrane"/>
    <property type="evidence" value="ECO:0007669"/>
    <property type="project" value="UniProtKB-SubCell"/>
</dbReference>
<dbReference type="GO" id="GO:0030670">
    <property type="term" value="C:phagocytic vesicle membrane"/>
    <property type="evidence" value="ECO:0007669"/>
    <property type="project" value="TreeGrafter"/>
</dbReference>
<dbReference type="GO" id="GO:0005886">
    <property type="term" value="C:plasma membrane"/>
    <property type="evidence" value="ECO:0007669"/>
    <property type="project" value="TreeGrafter"/>
</dbReference>
<dbReference type="GO" id="GO:0015086">
    <property type="term" value="F:cadmium ion transmembrane transporter activity"/>
    <property type="evidence" value="ECO:0007669"/>
    <property type="project" value="TreeGrafter"/>
</dbReference>
<dbReference type="GO" id="GO:0005381">
    <property type="term" value="F:iron ion transmembrane transporter activity"/>
    <property type="evidence" value="ECO:0000250"/>
    <property type="project" value="UniProtKB"/>
</dbReference>
<dbReference type="GO" id="GO:0005384">
    <property type="term" value="F:manganese ion transmembrane transporter activity"/>
    <property type="evidence" value="ECO:0000250"/>
    <property type="project" value="UniProtKB"/>
</dbReference>
<dbReference type="GO" id="GO:0051139">
    <property type="term" value="F:metal cation:proton antiporter activity"/>
    <property type="evidence" value="ECO:0000250"/>
    <property type="project" value="UniProtKB"/>
</dbReference>
<dbReference type="GO" id="GO:0006826">
    <property type="term" value="P:iron ion transport"/>
    <property type="evidence" value="ECO:0000250"/>
    <property type="project" value="UniProtKB"/>
</dbReference>
<dbReference type="GO" id="GO:0006828">
    <property type="term" value="P:manganese ion transport"/>
    <property type="evidence" value="ECO:0000250"/>
    <property type="project" value="UniProtKB"/>
</dbReference>
<dbReference type="HAMAP" id="MF_00221">
    <property type="entry name" value="NRAMP"/>
    <property type="match status" value="1"/>
</dbReference>
<dbReference type="InterPro" id="IPR001046">
    <property type="entry name" value="NRAMP_fam"/>
</dbReference>
<dbReference type="NCBIfam" id="TIGR01197">
    <property type="entry name" value="nramp"/>
    <property type="match status" value="1"/>
</dbReference>
<dbReference type="NCBIfam" id="NF037982">
    <property type="entry name" value="Nramp_1"/>
    <property type="match status" value="1"/>
</dbReference>
<dbReference type="PANTHER" id="PTHR11706:SF52">
    <property type="entry name" value="NATURAL RESISTANCE-ASSOCIATED MACROPHAGE PROTEIN 1"/>
    <property type="match status" value="1"/>
</dbReference>
<dbReference type="PANTHER" id="PTHR11706">
    <property type="entry name" value="SOLUTE CARRIER PROTEIN FAMILY 11 MEMBER"/>
    <property type="match status" value="1"/>
</dbReference>
<dbReference type="Pfam" id="PF01566">
    <property type="entry name" value="Nramp"/>
    <property type="match status" value="1"/>
</dbReference>
<dbReference type="PRINTS" id="PR00447">
    <property type="entry name" value="NATRESASSCMP"/>
</dbReference>
<name>NRAM1_BUBBU</name>